<gene>
    <name evidence="1" type="primary">yeiP</name>
    <name type="ordered locus">ECH74115_3309</name>
</gene>
<sequence length="190" mass="21533">MPRANEIKKGMVLNYNGKLLLVKDIDIQSPTARGAATLYKMRFSDVRTGLKVEERFKGDDIVDTVTLTRRYVDFSYVDGNEYVFMDKEDYTPYTFTKDQIEEELLFMPEGGMPDMQVLTWDGQLLALELPQTVDLEIVETAPGIKGASASARNKPATLSTGLVIQVPEYLSPGEKIRIHIEERRYMGRAD</sequence>
<feature type="chain" id="PRO_1000130913" description="Elongation factor P-like protein">
    <location>
        <begin position="1"/>
        <end position="190"/>
    </location>
</feature>
<protein>
    <recommendedName>
        <fullName evidence="1">Elongation factor P-like protein</fullName>
    </recommendedName>
</protein>
<accession>B5YWW4</accession>
<name>EFPL_ECO5E</name>
<organism>
    <name type="scientific">Escherichia coli O157:H7 (strain EC4115 / EHEC)</name>
    <dbReference type="NCBI Taxonomy" id="444450"/>
    <lineage>
        <taxon>Bacteria</taxon>
        <taxon>Pseudomonadati</taxon>
        <taxon>Pseudomonadota</taxon>
        <taxon>Gammaproteobacteria</taxon>
        <taxon>Enterobacterales</taxon>
        <taxon>Enterobacteriaceae</taxon>
        <taxon>Escherichia</taxon>
    </lineage>
</organism>
<reference key="1">
    <citation type="journal article" date="2011" name="Proc. Natl. Acad. Sci. U.S.A.">
        <title>Genomic anatomy of Escherichia coli O157:H7 outbreaks.</title>
        <authorList>
            <person name="Eppinger M."/>
            <person name="Mammel M.K."/>
            <person name="Leclerc J.E."/>
            <person name="Ravel J."/>
            <person name="Cebula T.A."/>
        </authorList>
    </citation>
    <scope>NUCLEOTIDE SEQUENCE [LARGE SCALE GENOMIC DNA]</scope>
    <source>
        <strain>EC4115 / EHEC</strain>
    </source>
</reference>
<comment type="similarity">
    <text evidence="1">Belongs to the elongation factor P family.</text>
</comment>
<evidence type="ECO:0000255" key="1">
    <source>
        <dbReference type="HAMAP-Rule" id="MF_00646"/>
    </source>
</evidence>
<dbReference type="EMBL" id="CP001164">
    <property type="protein sequence ID" value="ACI38928.1"/>
    <property type="molecule type" value="Genomic_DNA"/>
</dbReference>
<dbReference type="RefSeq" id="WP_001136827.1">
    <property type="nucleotide sequence ID" value="NC_011353.1"/>
</dbReference>
<dbReference type="SMR" id="B5YWW4"/>
<dbReference type="GeneID" id="93775010"/>
<dbReference type="KEGG" id="ecf:ECH74115_3309"/>
<dbReference type="HOGENOM" id="CLU_074944_2_0_6"/>
<dbReference type="GO" id="GO:0005829">
    <property type="term" value="C:cytosol"/>
    <property type="evidence" value="ECO:0007669"/>
    <property type="project" value="UniProtKB-ARBA"/>
</dbReference>
<dbReference type="GO" id="GO:0003746">
    <property type="term" value="F:translation elongation factor activity"/>
    <property type="evidence" value="ECO:0007669"/>
    <property type="project" value="UniProtKB-UniRule"/>
</dbReference>
<dbReference type="GO" id="GO:0043043">
    <property type="term" value="P:peptide biosynthetic process"/>
    <property type="evidence" value="ECO:0007669"/>
    <property type="project" value="InterPro"/>
</dbReference>
<dbReference type="CDD" id="cd04470">
    <property type="entry name" value="S1_EF-P_repeat_1"/>
    <property type="match status" value="1"/>
</dbReference>
<dbReference type="CDD" id="cd05794">
    <property type="entry name" value="S1_EF-P_repeat_2"/>
    <property type="match status" value="1"/>
</dbReference>
<dbReference type="FunFam" id="2.40.50.140:FF:000004">
    <property type="entry name" value="Elongation factor P"/>
    <property type="match status" value="1"/>
</dbReference>
<dbReference type="FunFam" id="2.30.30.30:FF:000011">
    <property type="entry name" value="Elongation factor P-like protein"/>
    <property type="match status" value="1"/>
</dbReference>
<dbReference type="FunFam" id="2.40.50.140:FF:000053">
    <property type="entry name" value="Elongation factor P-like protein"/>
    <property type="match status" value="1"/>
</dbReference>
<dbReference type="Gene3D" id="2.30.30.30">
    <property type="match status" value="1"/>
</dbReference>
<dbReference type="Gene3D" id="2.40.50.140">
    <property type="entry name" value="Nucleic acid-binding proteins"/>
    <property type="match status" value="2"/>
</dbReference>
<dbReference type="HAMAP" id="MF_00646">
    <property type="entry name" value="EFP"/>
    <property type="match status" value="1"/>
</dbReference>
<dbReference type="InterPro" id="IPR015365">
    <property type="entry name" value="Elong-fact-P_C"/>
</dbReference>
<dbReference type="InterPro" id="IPR012340">
    <property type="entry name" value="NA-bd_OB-fold"/>
</dbReference>
<dbReference type="InterPro" id="IPR014722">
    <property type="entry name" value="Rib_uL2_dom2"/>
</dbReference>
<dbReference type="InterPro" id="IPR020599">
    <property type="entry name" value="Transl_elong_fac_P/YeiP"/>
</dbReference>
<dbReference type="InterPro" id="IPR013185">
    <property type="entry name" value="Transl_elong_KOW-like"/>
</dbReference>
<dbReference type="InterPro" id="IPR011897">
    <property type="entry name" value="Transl_elong_p-like_YeiP"/>
</dbReference>
<dbReference type="InterPro" id="IPR001059">
    <property type="entry name" value="Transl_elong_P/YeiP_cen"/>
</dbReference>
<dbReference type="InterPro" id="IPR013852">
    <property type="entry name" value="Transl_elong_P/YeiP_CS"/>
</dbReference>
<dbReference type="InterPro" id="IPR008991">
    <property type="entry name" value="Translation_prot_SH3-like_sf"/>
</dbReference>
<dbReference type="NCBIfam" id="NF001810">
    <property type="entry name" value="PRK00529.1"/>
    <property type="match status" value="1"/>
</dbReference>
<dbReference type="NCBIfam" id="NF003392">
    <property type="entry name" value="PRK04542.1"/>
    <property type="match status" value="1"/>
</dbReference>
<dbReference type="NCBIfam" id="TIGR02178">
    <property type="entry name" value="yeiP"/>
    <property type="match status" value="1"/>
</dbReference>
<dbReference type="PANTHER" id="PTHR30053">
    <property type="entry name" value="ELONGATION FACTOR P"/>
    <property type="match status" value="1"/>
</dbReference>
<dbReference type="PANTHER" id="PTHR30053:SF14">
    <property type="entry name" value="TRANSLATION ELONGATION FACTOR KOW-LIKE DOMAIN-CONTAINING PROTEIN"/>
    <property type="match status" value="1"/>
</dbReference>
<dbReference type="Pfam" id="PF01132">
    <property type="entry name" value="EFP"/>
    <property type="match status" value="1"/>
</dbReference>
<dbReference type="Pfam" id="PF08207">
    <property type="entry name" value="EFP_N"/>
    <property type="match status" value="1"/>
</dbReference>
<dbReference type="Pfam" id="PF09285">
    <property type="entry name" value="Elong-fact-P_C"/>
    <property type="match status" value="1"/>
</dbReference>
<dbReference type="PIRSF" id="PIRSF005901">
    <property type="entry name" value="EF-P"/>
    <property type="match status" value="1"/>
</dbReference>
<dbReference type="SMART" id="SM01185">
    <property type="entry name" value="EFP"/>
    <property type="match status" value="1"/>
</dbReference>
<dbReference type="SMART" id="SM00841">
    <property type="entry name" value="Elong-fact-P_C"/>
    <property type="match status" value="1"/>
</dbReference>
<dbReference type="SUPFAM" id="SSF50249">
    <property type="entry name" value="Nucleic acid-binding proteins"/>
    <property type="match status" value="2"/>
</dbReference>
<dbReference type="SUPFAM" id="SSF50104">
    <property type="entry name" value="Translation proteins SH3-like domain"/>
    <property type="match status" value="1"/>
</dbReference>
<dbReference type="PROSITE" id="PS01275">
    <property type="entry name" value="EFP"/>
    <property type="match status" value="1"/>
</dbReference>
<proteinExistence type="inferred from homology"/>